<comment type="function">
    <text evidence="2 3 5">A cholesterol-dependent toxin that causes cytolysis by forming pores in cholesterol-containing host membranes (PubMed:6997696). After binding to target membranes, the protein undergoes a major conformation change, leading to its insertion in the host membrane and formation of an oligomeric pore complex. Cholesterol is required for binding to host membranes, membrane insertion and pore formation; cholesterol binding is mediated by a Thr-Leu pair in the C-terminus (By similarity).</text>
</comment>
<comment type="activity regulation">
    <text evidence="5">Cytolysis of host cells is inhibited by cholesterol.</text>
</comment>
<comment type="subunit">
    <text evidence="3">Homooligomeric pore complex containing 35-50 subunits; when inserted in the host membrane.</text>
</comment>
<comment type="subcellular location">
    <subcellularLocation>
        <location evidence="5">Secreted</location>
    </subcellularLocation>
    <subcellularLocation>
        <location evidence="2">Host cell membrane</location>
        <topology evidence="3">Multi-pass membrane protein</topology>
    </subcellularLocation>
    <text evidence="3">Secreted as soluble protein that then inserts into the host cell membrane and forms huge pores formed by transmembrane beta-strands.</text>
</comment>
<comment type="PTM">
    <text evidence="5">Purified 48 and 53 kDa proteins with 4 different pIs (6.1, 5.6, 5.3 and 6.6) in decreasing order of activity.</text>
</comment>
<comment type="similarity">
    <text evidence="8">Belongs to the cholesterol-dependent cytolysin family.</text>
</comment>
<dbReference type="EMBL" id="AE015927">
    <property type="protein sequence ID" value="AAO36403.1"/>
    <property type="molecule type" value="Genomic_DNA"/>
</dbReference>
<dbReference type="SMR" id="Q893D9"/>
<dbReference type="STRING" id="212717.CTC_01888"/>
<dbReference type="GeneID" id="24254589"/>
<dbReference type="KEGG" id="ctc:CTC_01888"/>
<dbReference type="HOGENOM" id="CLU_026912_1_0_9"/>
<dbReference type="OrthoDB" id="1875540at2"/>
<dbReference type="Proteomes" id="UP000001412">
    <property type="component" value="Chromosome"/>
</dbReference>
<dbReference type="GO" id="GO:0005576">
    <property type="term" value="C:extracellular region"/>
    <property type="evidence" value="ECO:0007669"/>
    <property type="project" value="UniProtKB-SubCell"/>
</dbReference>
<dbReference type="GO" id="GO:0020002">
    <property type="term" value="C:host cell plasma membrane"/>
    <property type="evidence" value="ECO:0007669"/>
    <property type="project" value="UniProtKB-SubCell"/>
</dbReference>
<dbReference type="GO" id="GO:0016020">
    <property type="term" value="C:membrane"/>
    <property type="evidence" value="ECO:0007669"/>
    <property type="project" value="UniProtKB-KW"/>
</dbReference>
<dbReference type="GO" id="GO:0015485">
    <property type="term" value="F:cholesterol binding"/>
    <property type="evidence" value="ECO:0007669"/>
    <property type="project" value="InterPro"/>
</dbReference>
<dbReference type="GO" id="GO:0090729">
    <property type="term" value="F:toxin activity"/>
    <property type="evidence" value="ECO:0007669"/>
    <property type="project" value="UniProtKB-KW"/>
</dbReference>
<dbReference type="GO" id="GO:0031640">
    <property type="term" value="P:killing of cells of another organism"/>
    <property type="evidence" value="ECO:0007669"/>
    <property type="project" value="UniProtKB-KW"/>
</dbReference>
<dbReference type="Gene3D" id="3.30.1040.20">
    <property type="match status" value="1"/>
</dbReference>
<dbReference type="Gene3D" id="3.40.30.40">
    <property type="entry name" value="Perfringolysin"/>
    <property type="match status" value="1"/>
</dbReference>
<dbReference type="Gene3D" id="2.60.40.1430">
    <property type="entry name" value="Perfringolysin, domain 4"/>
    <property type="match status" value="1"/>
</dbReference>
<dbReference type="Gene3D" id="3.90.840.10">
    <property type="entry name" value="Thiol-activated cytolysin superfamily/Thiol-activated cytolysin, alpha-beta domain"/>
    <property type="match status" value="1"/>
</dbReference>
<dbReference type="InterPro" id="IPR035390">
    <property type="entry name" value="Thiol_cytolys_C"/>
</dbReference>
<dbReference type="InterPro" id="IPR038700">
    <property type="entry name" value="Thiol_cytolys_C_sf"/>
</dbReference>
<dbReference type="InterPro" id="IPR001869">
    <property type="entry name" value="Thiol_cytolysin"/>
</dbReference>
<dbReference type="InterPro" id="IPR036363">
    <property type="entry name" value="Thiol_cytolysin_ab_sf"/>
</dbReference>
<dbReference type="InterPro" id="IPR036359">
    <property type="entry name" value="Thiol_cytolysin_sf"/>
</dbReference>
<dbReference type="Pfam" id="PF17440">
    <property type="entry name" value="Thiol_cytolys_C"/>
    <property type="match status" value="1"/>
</dbReference>
<dbReference type="Pfam" id="PF01289">
    <property type="entry name" value="Thiol_cytolysin"/>
    <property type="match status" value="1"/>
</dbReference>
<dbReference type="PRINTS" id="PR01400">
    <property type="entry name" value="TACYTOLYSIN"/>
</dbReference>
<dbReference type="SUPFAM" id="SSF56978">
    <property type="entry name" value="Perfringolysin"/>
    <property type="match status" value="1"/>
</dbReference>
<dbReference type="PROSITE" id="PS00481">
    <property type="entry name" value="THIOL_CYTOLYSINS"/>
    <property type="match status" value="1"/>
</dbReference>
<keyword id="KW-0204">Cytolysis</keyword>
<keyword id="KW-0354">Hemolysis</keyword>
<keyword id="KW-1032">Host cell membrane</keyword>
<keyword id="KW-1043">Host membrane</keyword>
<keyword id="KW-0446">Lipid-binding</keyword>
<keyword id="KW-0472">Membrane</keyword>
<keyword id="KW-1185">Reference proteome</keyword>
<keyword id="KW-0964">Secreted</keyword>
<keyword id="KW-0732">Signal</keyword>
<keyword id="KW-0800">Toxin</keyword>
<keyword id="KW-0812">Transmembrane</keyword>
<keyword id="KW-1134">Transmembrane beta strand</keyword>
<keyword id="KW-0843">Virulence</keyword>
<organism>
    <name type="scientific">Clostridium tetani (strain Massachusetts / E88)</name>
    <dbReference type="NCBI Taxonomy" id="212717"/>
    <lineage>
        <taxon>Bacteria</taxon>
        <taxon>Bacillati</taxon>
        <taxon>Bacillota</taxon>
        <taxon>Clostridia</taxon>
        <taxon>Eubacteriales</taxon>
        <taxon>Clostridiaceae</taxon>
        <taxon>Clostridium</taxon>
    </lineage>
</organism>
<feature type="signal peptide" evidence="4">
    <location>
        <begin position="1"/>
        <end position="32"/>
    </location>
</feature>
<feature type="chain" id="PRO_5009737782" description="Tetanolysin">
    <location>
        <begin position="33"/>
        <end position="527"/>
    </location>
</feature>
<feature type="transmembrane region" description="Beta stranded" evidence="3">
    <location>
        <begin position="215"/>
        <end position="228"/>
    </location>
</feature>
<feature type="transmembrane region" description="Beta stranded" evidence="3">
    <location>
        <begin position="235"/>
        <end position="244"/>
    </location>
</feature>
<feature type="transmembrane region" description="Beta stranded" evidence="3">
    <location>
        <begin position="313"/>
        <end position="322"/>
    </location>
</feature>
<feature type="transmembrane region" description="Beta stranded" evidence="3">
    <location>
        <begin position="330"/>
        <end position="342"/>
    </location>
</feature>
<feature type="short sequence motif" description="Conserved undecapeptide" evidence="8">
    <location>
        <begin position="484"/>
        <end position="494"/>
    </location>
</feature>
<feature type="short sequence motif" description="Cholesterol binding" evidence="1">
    <location>
        <begin position="516"/>
        <end position="517"/>
    </location>
</feature>
<proteinExistence type="evidence at protein level"/>
<gene>
    <name type="ordered locus">CTC_01888</name>
</gene>
<protein>
    <recommendedName>
        <fullName evidence="7">Tetanolysin</fullName>
    </recommendedName>
    <alternativeName>
        <fullName evidence="6">Tetanolysin O</fullName>
    </alternativeName>
    <alternativeName>
        <fullName>Thiol-activated cytolysin</fullName>
    </alternativeName>
</protein>
<reference key="1">
    <citation type="journal article" date="2003" name="Proc. Natl. Acad. Sci. U.S.A.">
        <title>The genome sequence of Clostridium tetani, the causative agent of tetanus disease.</title>
        <authorList>
            <person name="Brueggemann H."/>
            <person name="Baeumer S."/>
            <person name="Fricke W.F."/>
            <person name="Wiezer A."/>
            <person name="Liesegang H."/>
            <person name="Decker I."/>
            <person name="Herzberg C."/>
            <person name="Martinez-Arias R."/>
            <person name="Merkl R."/>
            <person name="Henne A."/>
            <person name="Gottschalk G."/>
        </authorList>
    </citation>
    <scope>NUCLEOTIDE SEQUENCE [LARGE SCALE GENOMIC DNA]</scope>
    <source>
        <strain>Massachusetts / E88</strain>
    </source>
</reference>
<reference key="2">
    <citation type="journal article" date="1980" name="Microbiol. Immunol.">
        <title>Purification and some properties of tetanolysin.</title>
        <authorList>
            <person name="Mitsui N."/>
            <person name="Mitsui K."/>
            <person name="Hase J."/>
        </authorList>
    </citation>
    <scope>FUNCTION AS A TOXIN</scope>
    <scope>ACTIVITY REGULATION</scope>
    <scope>PURIFICATION</scope>
    <scope>SUBCELLULAR LOCATION</scope>
    <scope>POST-TRANSLATIONAL MODIFICATION</scope>
    <source>
        <strain>Harvard A-47</strain>
    </source>
</reference>
<accession>Q893D9</accession>
<sequence>MNKNVLKFVSRSLLIFSMTGLISNYNSSNVLAKGNVEEHSLINNGQVVTSNTKCNLAKDNSSDIDKNIYGLSYDPRKILSYNGEQVENFVPAEGFENPDKFIVVKREKKSISDSTADISIIDSINDRTYPGAIQLANRNLMENKPDIISCERKPITISVDLPGMAEDGKKVVNSPTYSSVNSAINSILDTWNSKYSSKYTIPTRMSYSDTMVYSQSQLSAAVGCNFKALNKALNIDFDSIFKGEKKVMLLAYKQIFYTVSVDPPNRPSDLFGDSVTFDELALKGINNNNPPAYVSNVAYGRTIYVKLETTSKSSHVKAAFKALINNQDISSNAEYKDILNQSSFTATVLGGGAQEHNKIITKDFDEIRNIIKNNSVYSPQNPGYPISYTTTFLKDNSIASVNNKTEYIETTATEYTNGKIVLDHSGAYVAQFQVTWDEVSYDEKGNEIVEHKAWEGNNRDRTAHFNTEIYLKGNARNISVKIRECTGLAWEWWRTIVDVKNIPLAKERTFYIWGTTLYPKTSIETKM</sequence>
<evidence type="ECO:0000250" key="1">
    <source>
        <dbReference type="UniProtKB" id="P0C2E9"/>
    </source>
</evidence>
<evidence type="ECO:0000250" key="2">
    <source>
        <dbReference type="UniProtKB" id="P13128"/>
    </source>
</evidence>
<evidence type="ECO:0000250" key="3">
    <source>
        <dbReference type="UniProtKB" id="Q04IN8"/>
    </source>
</evidence>
<evidence type="ECO:0000255" key="4"/>
<evidence type="ECO:0000269" key="5">
    <source>
    </source>
</evidence>
<evidence type="ECO:0000303" key="6">
    <source>
    </source>
</evidence>
<evidence type="ECO:0000303" key="7">
    <source>
    </source>
</evidence>
<evidence type="ECO:0000305" key="8"/>
<name>TACY_CLOTE</name>